<organism>
    <name type="scientific">Hottentotta tamulus</name>
    <name type="common">Eastern Indian scorpion</name>
    <name type="synonym">Mesobuthus tamulus</name>
    <dbReference type="NCBI Taxonomy" id="34647"/>
    <lineage>
        <taxon>Eukaryota</taxon>
        <taxon>Metazoa</taxon>
        <taxon>Ecdysozoa</taxon>
        <taxon>Arthropoda</taxon>
        <taxon>Chelicerata</taxon>
        <taxon>Arachnida</taxon>
        <taxon>Scorpiones</taxon>
        <taxon>Buthida</taxon>
        <taxon>Buthoidea</taxon>
        <taxon>Buthidae</taxon>
        <taxon>Mesobuthus</taxon>
    </lineage>
</organism>
<reference key="1">
    <citation type="journal article" date="2003" name="FEBS Lett.">
        <title>BTK-2, a new inhibitor of the Kv1.1 potassium channel purified from Indian scorpion Buthus tamulus.</title>
        <authorList>
            <person name="Dhawan R."/>
            <person name="Varshney A."/>
            <person name="Mathew M.K."/>
            <person name="Lala A.K."/>
        </authorList>
    </citation>
    <scope>PROTEIN SEQUENCE</scope>
    <scope>FUNCTION</scope>
    <scope>SUBCELLULAR LOCATION</scope>
    <scope>MASS SPECTROMETRY</scope>
    <scope>3D-STRUCTURE MODELING</scope>
    <source>
        <tissue>Venom</tissue>
    </source>
</reference>
<reference key="2">
    <citation type="journal article" date="2011" name="Biochim. Biophys. Acta">
        <title>Solution structure of BTK-2, a novel hK(v)1.1 inhibiting scorpion toxin, from the eastern Indian scorpion Mesobuthus tamulus.</title>
        <authorList>
            <person name="Kumar G.S."/>
            <person name="Upadhyay S."/>
            <person name="Mathew M.K."/>
            <person name="Sarma S.P."/>
        </authorList>
    </citation>
    <scope>STRUCTURE BY NMR</scope>
    <scope>DISULFIDE BOND</scope>
    <source>
        <tissue>Venom</tissue>
    </source>
</reference>
<name>KAX94_HOTTA</name>
<proteinExistence type="evidence at protein level"/>
<keyword id="KW-0002">3D-structure</keyword>
<keyword id="KW-0903">Direct protein sequencing</keyword>
<keyword id="KW-1015">Disulfide bond</keyword>
<keyword id="KW-0872">Ion channel impairing toxin</keyword>
<keyword id="KW-0528">Neurotoxin</keyword>
<keyword id="KW-0632">Potassium channel impairing toxin</keyword>
<keyword id="KW-0964">Secreted</keyword>
<keyword id="KW-0800">Toxin</keyword>
<keyword id="KW-1220">Voltage-gated potassium channel impairing toxin</keyword>
<evidence type="ECO:0000269" key="1">
    <source>
    </source>
</evidence>
<evidence type="ECO:0000269" key="2">
    <source>
    </source>
</evidence>
<evidence type="ECO:0000303" key="3">
    <source>
    </source>
</evidence>
<evidence type="ECO:0000305" key="4"/>
<evidence type="ECO:0000305" key="5">
    <source>
    </source>
</evidence>
<evidence type="ECO:0000312" key="6">
    <source>
        <dbReference type="PDB" id="2KTC"/>
    </source>
</evidence>
<evidence type="ECO:0007829" key="7">
    <source>
        <dbReference type="PDB" id="2KTC"/>
    </source>
</evidence>
<feature type="peptide" id="PRO_0000044948" description="Potassium channel toxin alpha-KTx 9.4" evidence="1">
    <location>
        <begin position="1"/>
        <end position="32"/>
    </location>
</feature>
<feature type="disulfide bond" evidence="2 6">
    <location>
        <begin position="3"/>
        <end position="19"/>
    </location>
</feature>
<feature type="disulfide bond" evidence="2 6">
    <location>
        <begin position="6"/>
        <end position="24"/>
    </location>
</feature>
<feature type="disulfide bond" evidence="2 6">
    <location>
        <begin position="10"/>
        <end position="26"/>
    </location>
</feature>
<feature type="helix" evidence="7">
    <location>
        <begin position="2"/>
        <end position="8"/>
    </location>
</feature>
<feature type="strand" evidence="7">
    <location>
        <begin position="17"/>
        <end position="20"/>
    </location>
</feature>
<feature type="strand" evidence="7">
    <location>
        <begin position="23"/>
        <end position="26"/>
    </location>
</feature>
<dbReference type="PDB" id="2KTC">
    <property type="method" value="NMR"/>
    <property type="chains" value="A=1-32"/>
</dbReference>
<dbReference type="PDBsum" id="2KTC"/>
<dbReference type="BMRB" id="P60209"/>
<dbReference type="SMR" id="P60209"/>
<dbReference type="GO" id="GO:0005576">
    <property type="term" value="C:extracellular region"/>
    <property type="evidence" value="ECO:0007669"/>
    <property type="project" value="UniProtKB-SubCell"/>
</dbReference>
<dbReference type="GO" id="GO:0008200">
    <property type="term" value="F:ion channel inhibitor activity"/>
    <property type="evidence" value="ECO:0007669"/>
    <property type="project" value="InterPro"/>
</dbReference>
<dbReference type="GO" id="GO:0015459">
    <property type="term" value="F:potassium channel regulator activity"/>
    <property type="evidence" value="ECO:0007669"/>
    <property type="project" value="UniProtKB-KW"/>
</dbReference>
<dbReference type="GO" id="GO:0090729">
    <property type="term" value="F:toxin activity"/>
    <property type="evidence" value="ECO:0007669"/>
    <property type="project" value="UniProtKB-KW"/>
</dbReference>
<dbReference type="InterPro" id="IPR036574">
    <property type="entry name" value="Scorpion_toxin-like_sf"/>
</dbReference>
<dbReference type="InterPro" id="IPR008911">
    <property type="entry name" value="Toxin_alpha-KTx_8/9"/>
</dbReference>
<dbReference type="Pfam" id="PF05453">
    <property type="entry name" value="Toxin_6"/>
    <property type="match status" value="1"/>
</dbReference>
<dbReference type="SUPFAM" id="SSF57095">
    <property type="entry name" value="Scorpion toxin-like"/>
    <property type="match status" value="1"/>
</dbReference>
<protein>
    <recommendedName>
        <fullName evidence="4">Potassium channel toxin alpha-KTx 9.4</fullName>
    </recommendedName>
    <alternativeName>
        <fullName evidence="3">BTK-2</fullName>
    </alternativeName>
</protein>
<accession>P60209</accession>
<sequence length="32" mass="3456">VGCAECPMHCKGKMAKPTCENEVCKCNIGKKD</sequence>
<comment type="function">
    <text evidence="1">Blocker of human voltage-gated potassium channel Kv1.1/KCNA1 (PubMed:12650917).</text>
</comment>
<comment type="subcellular location">
    <subcellularLocation>
        <location evidence="1">Secreted</location>
    </subcellularLocation>
</comment>
<comment type="tissue specificity">
    <text evidence="5">Expressed by the venom gland.</text>
</comment>
<comment type="domain">
    <text evidence="2">Has the structural arrangement of an alpha-helix connected to a beta-sheet by disulfide bonds (CSalpha/beta).</text>
</comment>
<comment type="mass spectrometry" mass="3452.0" method="Electrospray" evidence="1"/>
<comment type="similarity">
    <text evidence="4">Belongs to the short scorpion toxin superfamily. Potassium channel inhibitor family. Alpha-KTx 09 subfamily.</text>
</comment>